<name>BRDT_MOUSE</name>
<sequence length="956" mass="107255">MSLPSRQTAIVNPPPPEYINTKKSGRLTNQLQFLQRVVLKALWKHGFSWPFQQPVDAVKLKLPDYYTIIKTPMDLNTIKKRLENKYYEKASECIEDFNTMFSNCYLYNKTGDDIVVMAQALEKLFMQKLSQMPQEEQVVGGKERIKKDIQQKIAVSSAKEQIPSKAAENVFKRQEIPSGLPDISLSPLNMAQEAPPICDSQSLVQITKGVKRRADTTTPTTSIAKASSESPPTLRETKPVNMPVKENTVKNVLPDSQQQHKVLKTVKVTEQLKHCSEILKEMLAKKHLPYAWPFYNPVDADALGLHNYYDVVKNPMDLGTIKGKMDNQEYKDAYEFAADVRLMFMNCYKYNPPDHEVVAMARTLQDVFELHFAKIPDEPIESMHACHLTTNSAQALSRESSSEASSGDASSEDSEDERVQHLAKLQEQLNAVHQQLQVLSQVPLRKLKKKNEKSKRAPKRKKVNNRDENPRKKPKQMKQKEKAKINQPKKKKPLLKSEEEDNAKPMNYDEKRQLSLDINKLPGDKLGRIVHIIQSREPSLRNSNPDEIEIDFETLKASTLRELEKYVLACLRKRSLKPQAKKVVRSKEELHSEKKLELERRLLDVNNQLNCRKRQTKRPAKVEKPPPPPPPPPPPPPPPELASGSRLTDSSSSSGSGSGSSSSSSGSSSSSSSSGSASSSSDSSSSDSSDSEPEIFPKFTGVKQNDLPPKENIKQIQSSVQDITSAEAPLAQQSTAPCGAPGKHSQQMLGCQVTQHLQATENTASVQTQPLSGDCKRVLLGPPVVHTSAESLTVLEPECHAPAQKDIKIKNADSWKSLGKPVKASSVLKSSDELFNQFRKAAIEKEVKARTQEQMRKHLEHNAKDPKVSQENQREPGSGLTLESLSSKVQDKSLEEDQSEQQPPSEAQDVSKLWLLKDRNLAREKEQERRRREAMAGTIDMTLQSDIMTMFENNFD</sequence>
<reference key="1">
    <citation type="journal article" date="2004" name="Gene Expr. Patterns">
        <title>Identification of unique, differentiation stage-specific patterns of expression of the bromodomain-containing genes Brd2, Brd3, Brd4, and Brdt in the mouse testis.</title>
        <authorList>
            <person name="Shang E."/>
            <person name="Salazar G."/>
            <person name="Crowley T.E."/>
            <person name="Wang X."/>
            <person name="Lopez R.A."/>
            <person name="Wang X."/>
            <person name="Wolgemuth D.J."/>
        </authorList>
    </citation>
    <scope>NUCLEOTIDE SEQUENCE [MRNA] (ISOFORM 1)</scope>
    <scope>TISSUE SPECIFICITY</scope>
    <source>
        <tissue>Testis</tissue>
    </source>
</reference>
<reference key="2">
    <citation type="submission" date="2005-03" db="EMBL/GenBank/DDBJ databases">
        <title>The Brd paralogous genes: testis-specific expression of the splicing variants.</title>
        <authorList>
            <person name="Taniguchi Y."/>
        </authorList>
    </citation>
    <scope>NUCLEOTIDE SEQUENCE [MRNA] (ISOFORM 2)</scope>
    <source>
        <tissue>Testis</tissue>
    </source>
</reference>
<reference key="3">
    <citation type="journal article" date="2009" name="PLoS Biol.">
        <title>Lineage-specific biology revealed by a finished genome assembly of the mouse.</title>
        <authorList>
            <person name="Church D.M."/>
            <person name="Goodstadt L."/>
            <person name="Hillier L.W."/>
            <person name="Zody M.C."/>
            <person name="Goldstein S."/>
            <person name="She X."/>
            <person name="Bult C.J."/>
            <person name="Agarwala R."/>
            <person name="Cherry J.L."/>
            <person name="DiCuccio M."/>
            <person name="Hlavina W."/>
            <person name="Kapustin Y."/>
            <person name="Meric P."/>
            <person name="Maglott D."/>
            <person name="Birtle Z."/>
            <person name="Marques A.C."/>
            <person name="Graves T."/>
            <person name="Zhou S."/>
            <person name="Teague B."/>
            <person name="Potamousis K."/>
            <person name="Churas C."/>
            <person name="Place M."/>
            <person name="Herschleb J."/>
            <person name="Runnheim R."/>
            <person name="Forrest D."/>
            <person name="Amos-Landgraf J."/>
            <person name="Schwartz D.C."/>
            <person name="Cheng Z."/>
            <person name="Lindblad-Toh K."/>
            <person name="Eichler E.E."/>
            <person name="Ponting C.P."/>
        </authorList>
    </citation>
    <scope>NUCLEOTIDE SEQUENCE [LARGE SCALE GENOMIC DNA]</scope>
    <source>
        <strain>C57BL/6J</strain>
    </source>
</reference>
<reference key="4">
    <citation type="submission" date="2005-07" db="EMBL/GenBank/DDBJ databases">
        <authorList>
            <person name="Mural R.J."/>
            <person name="Adams M.D."/>
            <person name="Myers E.W."/>
            <person name="Smith H.O."/>
            <person name="Venter J.C."/>
        </authorList>
    </citation>
    <scope>NUCLEOTIDE SEQUENCE [LARGE SCALE GENOMIC DNA]</scope>
</reference>
<reference key="5">
    <citation type="journal article" date="2003" name="Mol. Cell. Biol.">
        <title>Acetylation-dependent chromatin reorganization by BRDT, a testis-specific bromodomain-containing protein.</title>
        <authorList>
            <person name="Pivot-Pajot C."/>
            <person name="Caron C."/>
            <person name="Govin J."/>
            <person name="Vion A."/>
            <person name="Rousseaux S."/>
            <person name="Khochbin S."/>
        </authorList>
    </citation>
    <scope>FUNCTION</scope>
    <scope>INTERACTION WITH HISTONE H4</scope>
    <scope>MUTAGENESIS OF 50-PRO-PHE-51; VAL-55; 293-PRO-PHE-294 AND VAL-298</scope>
</reference>
<reference key="6">
    <citation type="journal article" date="2007" name="Development">
        <title>The first bromodomain of Brdt, a testis-specific member of the BET sub-family of double-bromodomain-containing proteins, is essential for male germ cell differentiation.</title>
        <authorList>
            <person name="Shang E."/>
            <person name="Nickerson H.D."/>
            <person name="Wen D."/>
            <person name="Wang X."/>
            <person name="Wolgemuth D.J."/>
        </authorList>
    </citation>
    <scope>SUBCELLULAR LOCATION</scope>
    <scope>TISSUE SPECIFICITY</scope>
    <scope>DISRUPTION PHENOTYPE</scope>
</reference>
<reference key="7">
    <citation type="journal article" date="2007" name="Genomics">
        <title>Bromodomain testis-specific protein is expressed in mouse oocyte and evolves faster than its ubiquitously expressed paralogs BRD2, -3, and -4.</title>
        <authorList>
            <person name="Paillisson A."/>
            <person name="Levasseur A."/>
            <person name="Gouret P."/>
            <person name="Callebaut I."/>
            <person name="Bontoux M."/>
            <person name="Pontarotti P."/>
            <person name="Monget P."/>
        </authorList>
    </citation>
    <scope>TISSUE SPECIFICITY</scope>
</reference>
<reference key="8">
    <citation type="journal article" date="2010" name="Cell">
        <title>A tissue-specific atlas of mouse protein phosphorylation and expression.</title>
        <authorList>
            <person name="Huttlin E.L."/>
            <person name="Jedrychowski M.P."/>
            <person name="Elias J.E."/>
            <person name="Goswami T."/>
            <person name="Rad R."/>
            <person name="Beausoleil S.A."/>
            <person name="Villen J."/>
            <person name="Haas W."/>
            <person name="Sowa M.E."/>
            <person name="Gygi S.P."/>
        </authorList>
    </citation>
    <scope>PHOSPHORYLATION [LARGE SCALE ANALYSIS] AT SER-186</scope>
    <scope>IDENTIFICATION BY MASS SPECTROMETRY [LARGE SCALE ANALYSIS]</scope>
    <source>
        <tissue>Testis</tissue>
    </source>
</reference>
<reference key="9">
    <citation type="journal article" date="2011" name="Dev. Biol.">
        <title>The first bromodomain of the testis-specific double bromodomain protein Brdt is required for chromocenter organization that is modulated by genetic background.</title>
        <authorList>
            <person name="Berkovits B.D."/>
            <person name="Wolgemuth D.J."/>
        </authorList>
    </citation>
    <scope>FUNCTION</scope>
    <scope>SUBCELLULAR LOCATION</scope>
    <scope>DISRUPTION PHENOTYPE</scope>
</reference>
<reference key="10">
    <citation type="journal article" date="2012" name="Cell">
        <title>Small-molecule inhibition of BRDT for male contraception.</title>
        <authorList>
            <person name="Matzuk M.M."/>
            <person name="McKeown M.R."/>
            <person name="Filippakopoulos P."/>
            <person name="Li Q."/>
            <person name="Ma L."/>
            <person name="Agno J.E."/>
            <person name="Lemieux M.E."/>
            <person name="Picaud S."/>
            <person name="Yu R.N."/>
            <person name="Qi J."/>
            <person name="Knapp S."/>
            <person name="Bradner J.E."/>
        </authorList>
    </citation>
    <scope>FUNCTION</scope>
</reference>
<reference key="11">
    <citation type="journal article" date="2012" name="EMBO J.">
        <title>Bromodomain-dependent stage-specific male genome programming by Brdt.</title>
        <authorList>
            <person name="Gaucher J."/>
            <person name="Boussouar F."/>
            <person name="Montellier E."/>
            <person name="Curtet S."/>
            <person name="Buchou T."/>
            <person name="Bertrand S."/>
            <person name="Hery P."/>
            <person name="Jounier S."/>
            <person name="Depaux A."/>
            <person name="Vitte A.L."/>
            <person name="Guardiola P."/>
            <person name="Pernet K."/>
            <person name="Debernardi A."/>
            <person name="Lopez F."/>
            <person name="Holota H."/>
            <person name="Imbert J."/>
            <person name="Wolgemuth D.J."/>
            <person name="Gerard M."/>
            <person name="Rousseaux S."/>
            <person name="Khochbin S."/>
        </authorList>
    </citation>
    <scope>FUNCTION</scope>
    <scope>DEVELOPMENTAL STAGE</scope>
    <scope>DISRUPTION PHENOTYPE</scope>
    <scope>INTERACTION WITH CDK9 AND CCNT1</scope>
</reference>
<reference key="12">
    <citation type="journal article" date="2012" name="Nucleic Acids Res.">
        <title>The testis-specific double bromodomain-containing protein BRDT forms a complex with multiple spliceosome components and is required for mRNA splicing and 3'-UTR truncation in round spermatids.</title>
        <authorList>
            <person name="Berkovits B.D."/>
            <person name="Wang L."/>
            <person name="Guarnieri P."/>
            <person name="Wolgemuth D.J."/>
        </authorList>
    </citation>
    <scope>FUNCTION</scope>
    <scope>INTERACTION WITH SRSF2; DDX5; HNRNPK AND TARDBP</scope>
</reference>
<reference key="13">
    <citation type="journal article" date="2016" name="Mol. Cell">
        <title>Dynamic competing histone H4 K5K8 acetylation and butyrylation are hallmarks of highly active gene promoters.</title>
        <authorList>
            <person name="Goudarzi A."/>
            <person name="Zhang D."/>
            <person name="Huang H."/>
            <person name="Barral S."/>
            <person name="Kwon O.K."/>
            <person name="Qi S."/>
            <person name="Tang Z."/>
            <person name="Buchou T."/>
            <person name="Vitte A.L."/>
            <person name="He T."/>
            <person name="Cheng Z."/>
            <person name="Montellier E."/>
            <person name="Gaucher J."/>
            <person name="Curtet S."/>
            <person name="Debernardi A."/>
            <person name="Charbonnier G."/>
            <person name="Puthier D."/>
            <person name="Petosa C."/>
            <person name="Panne D."/>
            <person name="Rousseaux S."/>
            <person name="Roeder R.G."/>
            <person name="Zhao Y."/>
            <person name="Khochbin S."/>
        </authorList>
    </citation>
    <scope>FUNCTION</scope>
    <scope>DOMAIN</scope>
</reference>
<reference key="14">
    <citation type="journal article" date="2020" name="Cell Rep.">
        <title>PHF7 Modulates BRDT Stability and Histone-to-Protamine Exchange during Spermiogenesis.</title>
        <authorList>
            <person name="Kim C.R."/>
            <person name="Noda T."/>
            <person name="Kim H."/>
            <person name="Kim G."/>
            <person name="Park S."/>
            <person name="Na Y."/>
            <person name="Oura S."/>
            <person name="Shimada K."/>
            <person name="Bang I."/>
            <person name="Ahn J.Y."/>
            <person name="Kim Y.R."/>
            <person name="Oh S.K."/>
            <person name="Choi H.J."/>
            <person name="Kim J.S."/>
            <person name="Jung I."/>
            <person name="Lee H."/>
            <person name="Okada Y."/>
            <person name="Ikawa M."/>
            <person name="Baek S.H."/>
        </authorList>
    </citation>
    <scope>FUNCTION</scope>
    <scope>SUBCELLULAR LOCATION</scope>
    <scope>TISSUE SPECIFICITY</scope>
    <scope>UBIQUITINATION</scope>
</reference>
<reference key="15">
    <citation type="journal article" date="2009" name="Nature">
        <title>Cooperative binding of two acetylation marks on a histone tail by a single bromodomain.</title>
        <authorList>
            <person name="Moriniere J."/>
            <person name="Rousseaux S."/>
            <person name="Steuerwald U."/>
            <person name="Soler-Lopez M."/>
            <person name="Curtet S."/>
            <person name="Vitte A.L."/>
            <person name="Govin J."/>
            <person name="Gaucher J."/>
            <person name="Sadoul K."/>
            <person name="Hart D.J."/>
            <person name="Krijgsveld J."/>
            <person name="Khochbin S."/>
            <person name="Muller C.W."/>
            <person name="Petosa C."/>
        </authorList>
    </citation>
    <scope>X-RAY CRYSTALLOGRAPHY (2.1 ANGSTROMS) OF 17-136 AND 257-382 IN COMPLEX WITH HISTONE H4 PEPTIDE</scope>
    <scope>FUNCTION</scope>
    <scope>SUBUNIT</scope>
    <scope>SUBCELLULAR LOCATION</scope>
</reference>
<accession>Q91Y44</accession>
<accession>G3X8Z8</accession>
<accession>Q59HJ4</accession>
<comment type="function">
    <text evidence="6 10 11 12 13 14 15 16">Testis-specific chromatin protein that specifically binds histone H4 acetylated at 'Lys-5' and 'Lys-8' (H4K5ac and H4K8ac, respectively) and plays a key role in spermatogenesis (PubMed:12861021, PubMed:19794495, PubMed:22901802, PubMed:22922464). Required in late pachytene spermatocytes: plays a role in meiotic and post-meiotic cells by binding to acetylated histones at the promoter of specific meiotic and post-meiotic genes, facilitating their activation at the appropriate time. In the post-meiotic phase of spermatogenesis, binds to hyperacetylated histones and participates in their general removal from DNA (PubMed:22901802, PubMed:32726616). Also recognizes and binds a subset of butyrylated histones: able to bind histone H4 butyrylated at 'Lys-8' (H4K8ac), while it is not able to bind H4 butyrylated at 'Lys-5' (H4K5ac) (PubMed:27105113). Also acts as a component of the splicing machinery in pachytene spermatocytes and round spermatids and participates in 3'-UTR truncation of specific mRNAs in post-meiotic spermatids (PubMed:22570411). Required for chromocenter organization, a structure comprised of peri-centromeric heterochromatin (PubMed:22020252).</text>
</comment>
<comment type="subunit">
    <text evidence="1 6 10 12 14">Interacts with SMARCE1 (By similarity). Interacts with mRNA splicing machinery proteins SRSF2, DDX5, HNRNPK and TARDBP. Interacts with the acetylated N-terminus of histone H1, H2, H3 and H4. Interacts with P-TEFb components CDK9 and CCNT1/cyclin-T1.</text>
</comment>
<comment type="interaction">
    <interactant intactId="EBI-6260929">
        <id>Q91Y44</id>
    </interactant>
    <interactant intactId="EBI-2655009">
        <id>Q9QWV9</id>
        <label>Ccnt1</label>
    </interactant>
    <organismsDiffer>false</organismsDiffer>
    <experiments>2</experiments>
</comment>
<comment type="interaction">
    <interactant intactId="EBI-6260929">
        <id>Q91Y44</id>
    </interactant>
    <interactant intactId="EBI-2654963">
        <id>Q99J95</id>
        <label>Cdk9</label>
    </interactant>
    <organismsDiffer>false</organismsDiffer>
    <experiments>3</experiments>
</comment>
<comment type="subcellular location">
    <subcellularLocation>
        <location evidence="9 10 11 16">Nucleus</location>
    </subcellularLocation>
    <text evidence="10 11">Detected on chromatin (PubMed:19794495). Excluded from the chromocenter.</text>
</comment>
<comment type="alternative products">
    <event type="alternative splicing"/>
    <isoform>
        <id>Q91Y44-1</id>
        <name>1</name>
        <sequence type="displayed"/>
    </isoform>
    <isoform>
        <id>Q91Y44-2</id>
        <name>2</name>
        <sequence type="described" ref="VSP_019119 VSP_019120"/>
    </isoform>
</comment>
<comment type="tissue specificity">
    <text evidence="7 8 9 16">Testis-specific. Expressed in germinal cells from the early meiotic (pachytene) spermatocytes and during spermiogenesis in the round and elongating spermatids until the condensed late spermatids (PubMed:32726616). No expression seen in spermatogonia.</text>
</comment>
<comment type="developmental stage">
    <text evidence="14">First detected when type B spermatogonia give rise to early meiotic cells (preleptotene, leptotene and zygotene) at 10-12 days post partum (dpp), producing a clearly detectable protein at 12 dpp (at protein level).</text>
</comment>
<comment type="domain">
    <text evidence="10 15">Bromo domains mediate interaction with histones that have acetylated lysine residues at specific positions. Bromo domain 1 mediates binding with histone H4 acetylated at 'Lys-5' and 'Lys-8' (H4K5ac and H4K8ac, respectively) (PubMed:19794495). The bromo domains also recognize and bind a subset of butyrylated histones: able to bind histone H4 butyrylated at 'Lys-8' (H4K8ac), while it is not able to bind H4 butyrylated at 'Lys-5' (H4K5ac) (PubMed:27105113).</text>
</comment>
<comment type="PTM">
    <text evidence="16">Ubiquitinated in a SPOP-dependent manner, leading to proteasomal degradation.</text>
</comment>
<comment type="disruption phenotype">
    <text evidence="9 11 14">Mice are viable but males are sterile, producing fewer and morphologically abnormal sperm. Aberrant morphogenesis are first detected in step 9 elongating spermatids, and those elongated spermatids that are formed lack the distinctive foci of heterochromatin at the peri-nuclear envelope. Spermatid nuclei show a fragmented chromocenter.</text>
</comment>
<comment type="miscellaneous">
    <text evidence="19">Brdt is a promising target for male contraception. Inhibition by thienodiazepine inhibitor (+)-JQ1 that binds Asn-108, prevents recognition of acetylated histone H4. Treatment of mice with JQ1 reduces seminiferous tubule area, testis size and spermatozoa number and motility without affecting hormone levels. JQ1 causes a complete and reversible contraceptive effect in male mice (PubMed:22901802).</text>
</comment>
<comment type="similarity">
    <text evidence="18">Belongs to the BET family.</text>
</comment>
<comment type="online information" name="Protein Spotlight">
    <link uri="https://www.proteinspotlight.org/back_issues/144"/>
    <text>Asking life to be patient - Issue 144 of November 2012</text>
</comment>
<dbReference type="EMBL" id="AF358660">
    <property type="protein sequence ID" value="AAK50736.1"/>
    <property type="molecule type" value="mRNA"/>
</dbReference>
<dbReference type="EMBL" id="AB208640">
    <property type="protein sequence ID" value="BAD91553.1"/>
    <property type="molecule type" value="mRNA"/>
</dbReference>
<dbReference type="EMBL" id="AC126598">
    <property type="status" value="NOT_ANNOTATED_CDS"/>
    <property type="molecule type" value="Genomic_DNA"/>
</dbReference>
<dbReference type="EMBL" id="CH466529">
    <property type="protein sequence ID" value="EDL20168.1"/>
    <property type="molecule type" value="Genomic_DNA"/>
</dbReference>
<dbReference type="CCDS" id="CCDS19500.1">
    <molecule id="Q91Y44-1"/>
</dbReference>
<dbReference type="CCDS" id="CCDS39197.1">
    <molecule id="Q91Y44-2"/>
</dbReference>
<dbReference type="RefSeq" id="NP_001073342.1">
    <molecule id="Q91Y44-2"/>
    <property type="nucleotide sequence ID" value="NM_001079873.1"/>
</dbReference>
<dbReference type="RefSeq" id="NP_473395.2">
    <molecule id="Q91Y44-1"/>
    <property type="nucleotide sequence ID" value="NM_054054.2"/>
</dbReference>
<dbReference type="PDB" id="2WP1">
    <property type="method" value="X-ray"/>
    <property type="resolution" value="2.10 A"/>
    <property type="chains" value="A/B=257-382"/>
</dbReference>
<dbReference type="PDB" id="2WP2">
    <property type="method" value="X-ray"/>
    <property type="resolution" value="2.37 A"/>
    <property type="chains" value="A/B=17-136"/>
</dbReference>
<dbReference type="PDBsum" id="2WP1"/>
<dbReference type="PDBsum" id="2WP2"/>
<dbReference type="SMR" id="Q91Y44"/>
<dbReference type="BioGRID" id="227777">
    <property type="interactions" value="2"/>
</dbReference>
<dbReference type="DIP" id="DIP-48975N"/>
<dbReference type="FunCoup" id="Q91Y44">
    <property type="interactions" value="627"/>
</dbReference>
<dbReference type="IntAct" id="Q91Y44">
    <property type="interactions" value="6"/>
</dbReference>
<dbReference type="MINT" id="Q91Y44"/>
<dbReference type="STRING" id="10090.ENSMUSP00000031215"/>
<dbReference type="GuidetoPHARMACOLOGY" id="2729"/>
<dbReference type="iPTMnet" id="Q91Y44"/>
<dbReference type="PhosphoSitePlus" id="Q91Y44"/>
<dbReference type="jPOST" id="Q91Y44"/>
<dbReference type="PaxDb" id="10090-ENSMUSP00000031215"/>
<dbReference type="PeptideAtlas" id="Q91Y44"/>
<dbReference type="ProteomicsDB" id="273763">
    <molecule id="Q91Y44-1"/>
</dbReference>
<dbReference type="ProteomicsDB" id="273764">
    <molecule id="Q91Y44-2"/>
</dbReference>
<dbReference type="Antibodypedia" id="3212">
    <property type="antibodies" value="136 antibodies from 22 providers"/>
</dbReference>
<dbReference type="DNASU" id="114642"/>
<dbReference type="Ensembl" id="ENSMUST00000031215.15">
    <molecule id="Q91Y44-1"/>
    <property type="protein sequence ID" value="ENSMUSP00000031215.9"/>
    <property type="gene ID" value="ENSMUSG00000029279.16"/>
</dbReference>
<dbReference type="Ensembl" id="ENSMUST00000112677.10">
    <molecule id="Q91Y44-2"/>
    <property type="protein sequence ID" value="ENSMUSP00000108297.4"/>
    <property type="gene ID" value="ENSMUSG00000029279.16"/>
</dbReference>
<dbReference type="GeneID" id="114642"/>
<dbReference type="KEGG" id="mmu:114642"/>
<dbReference type="UCSC" id="uc008ymb.1">
    <molecule id="Q91Y44-2"/>
    <property type="organism name" value="mouse"/>
</dbReference>
<dbReference type="UCSC" id="uc008ymc.1">
    <molecule id="Q91Y44-1"/>
    <property type="organism name" value="mouse"/>
</dbReference>
<dbReference type="AGR" id="MGI:1891374"/>
<dbReference type="CTD" id="676"/>
<dbReference type="MGI" id="MGI:1891374">
    <property type="gene designation" value="Brdt"/>
</dbReference>
<dbReference type="VEuPathDB" id="HostDB:ENSMUSG00000029279"/>
<dbReference type="eggNOG" id="KOG1474">
    <property type="taxonomic scope" value="Eukaryota"/>
</dbReference>
<dbReference type="GeneTree" id="ENSGT00940000154549"/>
<dbReference type="HOGENOM" id="CLU_001499_0_0_1"/>
<dbReference type="InParanoid" id="Q91Y44"/>
<dbReference type="OMA" id="DFKTMFL"/>
<dbReference type="OrthoDB" id="21449at2759"/>
<dbReference type="PhylomeDB" id="Q91Y44"/>
<dbReference type="TreeFam" id="TF317345"/>
<dbReference type="BioGRID-ORCS" id="114642">
    <property type="hits" value="0 hits in 82 CRISPR screens"/>
</dbReference>
<dbReference type="ChiTaRS" id="Brdt">
    <property type="organism name" value="mouse"/>
</dbReference>
<dbReference type="EvolutionaryTrace" id="Q91Y44"/>
<dbReference type="PRO" id="PR:Q91Y44"/>
<dbReference type="Proteomes" id="UP000000589">
    <property type="component" value="Chromosome 5"/>
</dbReference>
<dbReference type="RNAct" id="Q91Y44">
    <property type="molecule type" value="protein"/>
</dbReference>
<dbReference type="Bgee" id="ENSMUSG00000029279">
    <property type="expression patterns" value="Expressed in animal zygote and 194 other cell types or tissues"/>
</dbReference>
<dbReference type="GO" id="GO:0005634">
    <property type="term" value="C:nucleus"/>
    <property type="evidence" value="ECO:0000314"/>
    <property type="project" value="UniProtKB"/>
</dbReference>
<dbReference type="GO" id="GO:0042393">
    <property type="term" value="F:histone binding"/>
    <property type="evidence" value="ECO:0000314"/>
    <property type="project" value="MGI"/>
</dbReference>
<dbReference type="GO" id="GO:0140008">
    <property type="term" value="F:histone H4 reader activity"/>
    <property type="evidence" value="ECO:0000314"/>
    <property type="project" value="UniProtKB"/>
</dbReference>
<dbReference type="GO" id="GO:0006338">
    <property type="term" value="P:chromatin remodeling"/>
    <property type="evidence" value="ECO:0000314"/>
    <property type="project" value="UniProtKB"/>
</dbReference>
<dbReference type="GO" id="GO:0007141">
    <property type="term" value="P:male meiosis I"/>
    <property type="evidence" value="ECO:0000315"/>
    <property type="project" value="UniProtKB"/>
</dbReference>
<dbReference type="GO" id="GO:0007140">
    <property type="term" value="P:male meiotic nuclear division"/>
    <property type="evidence" value="ECO:0000315"/>
    <property type="project" value="UniProtKB"/>
</dbReference>
<dbReference type="GO" id="GO:0006397">
    <property type="term" value="P:mRNA processing"/>
    <property type="evidence" value="ECO:0007669"/>
    <property type="project" value="UniProtKB-KW"/>
</dbReference>
<dbReference type="GO" id="GO:0010628">
    <property type="term" value="P:positive regulation of gene expression"/>
    <property type="evidence" value="ECO:0000315"/>
    <property type="project" value="UniProtKB"/>
</dbReference>
<dbReference type="GO" id="GO:0006355">
    <property type="term" value="P:regulation of DNA-templated transcription"/>
    <property type="evidence" value="ECO:0007669"/>
    <property type="project" value="Ensembl"/>
</dbReference>
<dbReference type="GO" id="GO:0043484">
    <property type="term" value="P:regulation of RNA splicing"/>
    <property type="evidence" value="ECO:0000315"/>
    <property type="project" value="UniProtKB"/>
</dbReference>
<dbReference type="GO" id="GO:0008380">
    <property type="term" value="P:RNA splicing"/>
    <property type="evidence" value="ECO:0007669"/>
    <property type="project" value="UniProtKB-KW"/>
</dbReference>
<dbReference type="GO" id="GO:0035092">
    <property type="term" value="P:sperm DNA condensation"/>
    <property type="evidence" value="ECO:0000315"/>
    <property type="project" value="UniProtKB"/>
</dbReference>
<dbReference type="GO" id="GO:0007283">
    <property type="term" value="P:spermatogenesis"/>
    <property type="evidence" value="ECO:0000315"/>
    <property type="project" value="UniProtKB"/>
</dbReference>
<dbReference type="CDD" id="cd05497">
    <property type="entry name" value="Bromo_Brdt_I_like"/>
    <property type="match status" value="1"/>
</dbReference>
<dbReference type="CDD" id="cd05498">
    <property type="entry name" value="Bromo_Brdt_II_like"/>
    <property type="match status" value="1"/>
</dbReference>
<dbReference type="FunFam" id="1.20.920.10:FF:000003">
    <property type="entry name" value="Bromodomain-containing protein 2"/>
    <property type="match status" value="1"/>
</dbReference>
<dbReference type="FunFam" id="1.20.1270.220:FF:000001">
    <property type="entry name" value="bromodomain-containing protein 2 isoform X1"/>
    <property type="match status" value="1"/>
</dbReference>
<dbReference type="FunFam" id="1.20.920.10:FF:000002">
    <property type="entry name" value="Bromodomain-containing protein 4"/>
    <property type="match status" value="1"/>
</dbReference>
<dbReference type="Gene3D" id="1.20.1270.220">
    <property type="match status" value="1"/>
</dbReference>
<dbReference type="Gene3D" id="1.20.920.10">
    <property type="entry name" value="Bromodomain-like"/>
    <property type="match status" value="2"/>
</dbReference>
<dbReference type="InterPro" id="IPR031354">
    <property type="entry name" value="BRD4_CDT"/>
</dbReference>
<dbReference type="InterPro" id="IPR043508">
    <property type="entry name" value="Bromo_Brdt_I"/>
</dbReference>
<dbReference type="InterPro" id="IPR043509">
    <property type="entry name" value="Bromo_Brdt_II"/>
</dbReference>
<dbReference type="InterPro" id="IPR050935">
    <property type="entry name" value="Bromo_chromatin_reader"/>
</dbReference>
<dbReference type="InterPro" id="IPR001487">
    <property type="entry name" value="Bromodomain"/>
</dbReference>
<dbReference type="InterPro" id="IPR036427">
    <property type="entry name" value="Bromodomain-like_sf"/>
</dbReference>
<dbReference type="InterPro" id="IPR018359">
    <property type="entry name" value="Bromodomain_CS"/>
</dbReference>
<dbReference type="InterPro" id="IPR027353">
    <property type="entry name" value="NET_dom"/>
</dbReference>
<dbReference type="InterPro" id="IPR038336">
    <property type="entry name" value="NET_sf"/>
</dbReference>
<dbReference type="PANTHER" id="PTHR22880:SF175">
    <property type="entry name" value="BROMODOMAIN TESTIS-SPECIFIC PROTEIN"/>
    <property type="match status" value="1"/>
</dbReference>
<dbReference type="PANTHER" id="PTHR22880">
    <property type="entry name" value="FALZ-RELATED BROMODOMAIN-CONTAINING PROTEINS"/>
    <property type="match status" value="1"/>
</dbReference>
<dbReference type="Pfam" id="PF17035">
    <property type="entry name" value="BET"/>
    <property type="match status" value="1"/>
</dbReference>
<dbReference type="Pfam" id="PF17105">
    <property type="entry name" value="BRD4_CDT"/>
    <property type="match status" value="1"/>
</dbReference>
<dbReference type="Pfam" id="PF00439">
    <property type="entry name" value="Bromodomain"/>
    <property type="match status" value="2"/>
</dbReference>
<dbReference type="PRINTS" id="PR00503">
    <property type="entry name" value="BROMODOMAIN"/>
</dbReference>
<dbReference type="SMART" id="SM00297">
    <property type="entry name" value="BROMO"/>
    <property type="match status" value="2"/>
</dbReference>
<dbReference type="SUPFAM" id="SSF47370">
    <property type="entry name" value="Bromodomain"/>
    <property type="match status" value="2"/>
</dbReference>
<dbReference type="SUPFAM" id="SSF101447">
    <property type="entry name" value="Formin homology 2 domain (FH2 domain)"/>
    <property type="match status" value="1"/>
</dbReference>
<dbReference type="PROSITE" id="PS00633">
    <property type="entry name" value="BROMODOMAIN_1"/>
    <property type="match status" value="2"/>
</dbReference>
<dbReference type="PROSITE" id="PS50014">
    <property type="entry name" value="BROMODOMAIN_2"/>
    <property type="match status" value="2"/>
</dbReference>
<dbReference type="PROSITE" id="PS51525">
    <property type="entry name" value="NET"/>
    <property type="match status" value="1"/>
</dbReference>
<gene>
    <name type="primary">Brdt</name>
    <name type="synonym">Fsrg3</name>
</gene>
<organism>
    <name type="scientific">Mus musculus</name>
    <name type="common">Mouse</name>
    <dbReference type="NCBI Taxonomy" id="10090"/>
    <lineage>
        <taxon>Eukaryota</taxon>
        <taxon>Metazoa</taxon>
        <taxon>Chordata</taxon>
        <taxon>Craniata</taxon>
        <taxon>Vertebrata</taxon>
        <taxon>Euteleostomi</taxon>
        <taxon>Mammalia</taxon>
        <taxon>Eutheria</taxon>
        <taxon>Euarchontoglires</taxon>
        <taxon>Glires</taxon>
        <taxon>Rodentia</taxon>
        <taxon>Myomorpha</taxon>
        <taxon>Muroidea</taxon>
        <taxon>Muridae</taxon>
        <taxon>Murinae</taxon>
        <taxon>Mus</taxon>
        <taxon>Mus</taxon>
    </lineage>
</organism>
<feature type="chain" id="PRO_0000239227" description="Bromodomain testis-specific protein">
    <location>
        <begin position="1"/>
        <end position="956"/>
    </location>
</feature>
<feature type="domain" description="Bromo 1" evidence="3">
    <location>
        <begin position="26"/>
        <end position="132"/>
    </location>
</feature>
<feature type="domain" description="Bromo 2" evidence="3">
    <location>
        <begin position="266"/>
        <end position="375"/>
    </location>
</feature>
<feature type="domain" description="NET" evidence="4">
    <location>
        <begin position="496"/>
        <end position="578"/>
    </location>
</feature>
<feature type="region of interest" description="Disordered" evidence="5">
    <location>
        <begin position="210"/>
        <end position="239"/>
    </location>
</feature>
<feature type="region of interest" description="Disordered" evidence="5">
    <location>
        <begin position="391"/>
        <end position="420"/>
    </location>
</feature>
<feature type="region of interest" description="Disordered" evidence="5">
    <location>
        <begin position="442"/>
        <end position="508"/>
    </location>
</feature>
<feature type="region of interest" description="Disordered" evidence="5">
    <location>
        <begin position="607"/>
        <end position="747"/>
    </location>
</feature>
<feature type="region of interest" description="Disordered" evidence="5">
    <location>
        <begin position="859"/>
        <end position="934"/>
    </location>
</feature>
<feature type="coiled-coil region" evidence="2">
    <location>
        <begin position="417"/>
        <end position="442"/>
    </location>
</feature>
<feature type="coiled-coil region" evidence="2">
    <location>
        <begin position="844"/>
        <end position="940"/>
    </location>
</feature>
<feature type="short sequence motif" description="Nuclear localization signal" evidence="1">
    <location>
        <begin position="208"/>
        <end position="219"/>
    </location>
</feature>
<feature type="compositionally biased region" description="Polar residues" evidence="5">
    <location>
        <begin position="216"/>
        <end position="231"/>
    </location>
</feature>
<feature type="compositionally biased region" description="Low complexity" evidence="5">
    <location>
        <begin position="392"/>
        <end position="409"/>
    </location>
</feature>
<feature type="compositionally biased region" description="Basic residues" evidence="5">
    <location>
        <begin position="445"/>
        <end position="463"/>
    </location>
</feature>
<feature type="compositionally biased region" description="Pro residues" evidence="5">
    <location>
        <begin position="625"/>
        <end position="640"/>
    </location>
</feature>
<feature type="compositionally biased region" description="Low complexity" evidence="5">
    <location>
        <begin position="649"/>
        <end position="688"/>
    </location>
</feature>
<feature type="compositionally biased region" description="Polar residues" evidence="5">
    <location>
        <begin position="714"/>
        <end position="724"/>
    </location>
</feature>
<feature type="compositionally biased region" description="Basic and acidic residues" evidence="5">
    <location>
        <begin position="859"/>
        <end position="874"/>
    </location>
</feature>
<feature type="compositionally biased region" description="Basic and acidic residues" evidence="5">
    <location>
        <begin position="915"/>
        <end position="934"/>
    </location>
</feature>
<feature type="site" description="Histone H4K5ac binding" evidence="10">
    <location>
        <position position="108"/>
    </location>
</feature>
<feature type="site" description="Histone H4K5ac binding" evidence="10">
    <location>
        <position position="113"/>
    </location>
</feature>
<feature type="modified residue" description="Phosphoserine" evidence="20">
    <location>
        <position position="186"/>
    </location>
</feature>
<feature type="splice variant" id="VSP_019119" description="In isoform 2." evidence="17">
    <original>GKMD</original>
    <variation>VNTA</variation>
    <location>
        <begin position="323"/>
        <end position="326"/>
    </location>
</feature>
<feature type="splice variant" id="VSP_019120" description="In isoform 2." evidence="17">
    <location>
        <begin position="327"/>
        <end position="956"/>
    </location>
</feature>
<feature type="mutagenesis site" description="Abolishes interaction with histone H4 acetylated N-terminus; when associated with A-55." evidence="6">
    <original>PF</original>
    <variation>AA</variation>
    <location>
        <begin position="50"/>
        <end position="51"/>
    </location>
</feature>
<feature type="mutagenesis site" description="Abolishes interaction with histone H4 acetylated N-terminus; when associated with 50-AA-51." evidence="6">
    <original>V</original>
    <variation>A</variation>
    <location>
        <position position="55"/>
    </location>
</feature>
<feature type="mutagenesis site" description="Abolishes interaction with histone H4 acetylated N-terminus; when associated with A-298." evidence="6">
    <original>PF</original>
    <variation>AA</variation>
    <location>
        <begin position="293"/>
        <end position="294"/>
    </location>
</feature>
<feature type="mutagenesis site" description="Abolishes interaction with histone H4 acetylated N-terminus; when associated with 293-AA-294." evidence="6">
    <original>V</original>
    <variation>A</variation>
    <location>
        <position position="298"/>
    </location>
</feature>
<feature type="sequence conflict" description="In Ref. 2; BAD91553." evidence="18" ref="2">
    <original>K</original>
    <variation>R</variation>
    <location>
        <position position="208"/>
    </location>
</feature>
<feature type="sequence conflict" description="In Ref. 1; AAK50736." evidence="18" ref="1">
    <original>S</original>
    <variation>F</variation>
    <location>
        <position position="691"/>
    </location>
</feature>
<feature type="helix" evidence="22">
    <location>
        <begin position="29"/>
        <end position="36"/>
    </location>
</feature>
<feature type="helix" evidence="22">
    <location>
        <begin position="38"/>
        <end position="43"/>
    </location>
</feature>
<feature type="helix" evidence="22">
    <location>
        <begin position="46"/>
        <end position="51"/>
    </location>
</feature>
<feature type="turn" evidence="22">
    <location>
        <begin position="57"/>
        <end position="61"/>
    </location>
</feature>
<feature type="helix" evidence="22">
    <location>
        <begin position="65"/>
        <end position="68"/>
    </location>
</feature>
<feature type="helix" evidence="22">
    <location>
        <begin position="75"/>
        <end position="83"/>
    </location>
</feature>
<feature type="helix" evidence="22">
    <location>
        <begin position="90"/>
        <end position="107"/>
    </location>
</feature>
<feature type="helix" evidence="22">
    <location>
        <begin position="113"/>
        <end position="129"/>
    </location>
</feature>
<feature type="helix" evidence="21">
    <location>
        <begin position="264"/>
        <end position="282"/>
    </location>
</feature>
<feature type="helix" evidence="21">
    <location>
        <begin position="285"/>
        <end position="287"/>
    </location>
</feature>
<feature type="helix" evidence="21">
    <location>
        <begin position="288"/>
        <end position="291"/>
    </location>
</feature>
<feature type="helix" evidence="21">
    <location>
        <begin position="292"/>
        <end position="294"/>
    </location>
</feature>
<feature type="helix" evidence="21">
    <location>
        <begin position="300"/>
        <end position="303"/>
    </location>
</feature>
<feature type="helix" evidence="21">
    <location>
        <begin position="308"/>
        <end position="311"/>
    </location>
</feature>
<feature type="helix" evidence="21">
    <location>
        <begin position="318"/>
        <end position="326"/>
    </location>
</feature>
<feature type="helix" evidence="21">
    <location>
        <begin position="333"/>
        <end position="350"/>
    </location>
</feature>
<feature type="helix" evidence="21">
    <location>
        <begin position="356"/>
        <end position="372"/>
    </location>
</feature>
<feature type="strand" evidence="21">
    <location>
        <begin position="375"/>
        <end position="377"/>
    </location>
</feature>
<proteinExistence type="evidence at protein level"/>
<protein>
    <recommendedName>
        <fullName>Bromodomain testis-specific protein</fullName>
    </recommendedName>
    <alternativeName>
        <fullName>Bromodomain-containing female sterile homeotic-like protein</fullName>
    </alternativeName>
    <alternativeName>
        <fullName>RING3-like protein</fullName>
    </alternativeName>
</protein>
<keyword id="KW-0002">3D-structure</keyword>
<keyword id="KW-0010">Activator</keyword>
<keyword id="KW-0025">Alternative splicing</keyword>
<keyword id="KW-0103">Bromodomain</keyword>
<keyword id="KW-0156">Chromatin regulator</keyword>
<keyword id="KW-0175">Coiled coil</keyword>
<keyword id="KW-0221">Differentiation</keyword>
<keyword id="KW-0469">Meiosis</keyword>
<keyword id="KW-0507">mRNA processing</keyword>
<keyword id="KW-0508">mRNA splicing</keyword>
<keyword id="KW-0539">Nucleus</keyword>
<keyword id="KW-0597">Phosphoprotein</keyword>
<keyword id="KW-1185">Reference proteome</keyword>
<keyword id="KW-0677">Repeat</keyword>
<keyword id="KW-0744">Spermatogenesis</keyword>
<keyword id="KW-0804">Transcription</keyword>
<keyword id="KW-0805">Transcription regulation</keyword>
<keyword id="KW-0832">Ubl conjugation</keyword>
<evidence type="ECO:0000250" key="1">
    <source>
        <dbReference type="UniProtKB" id="Q58F21"/>
    </source>
</evidence>
<evidence type="ECO:0000255" key="2"/>
<evidence type="ECO:0000255" key="3">
    <source>
        <dbReference type="PROSITE-ProRule" id="PRU00035"/>
    </source>
</evidence>
<evidence type="ECO:0000255" key="4">
    <source>
        <dbReference type="PROSITE-ProRule" id="PRU00857"/>
    </source>
</evidence>
<evidence type="ECO:0000256" key="5">
    <source>
        <dbReference type="SAM" id="MobiDB-lite"/>
    </source>
</evidence>
<evidence type="ECO:0000269" key="6">
    <source>
    </source>
</evidence>
<evidence type="ECO:0000269" key="7">
    <source>
    </source>
</evidence>
<evidence type="ECO:0000269" key="8">
    <source>
    </source>
</evidence>
<evidence type="ECO:0000269" key="9">
    <source>
    </source>
</evidence>
<evidence type="ECO:0000269" key="10">
    <source>
    </source>
</evidence>
<evidence type="ECO:0000269" key="11">
    <source>
    </source>
</evidence>
<evidence type="ECO:0000269" key="12">
    <source>
    </source>
</evidence>
<evidence type="ECO:0000269" key="13">
    <source>
    </source>
</evidence>
<evidence type="ECO:0000269" key="14">
    <source>
    </source>
</evidence>
<evidence type="ECO:0000269" key="15">
    <source>
    </source>
</evidence>
<evidence type="ECO:0000269" key="16">
    <source>
    </source>
</evidence>
<evidence type="ECO:0000303" key="17">
    <source ref="2"/>
</evidence>
<evidence type="ECO:0000305" key="18"/>
<evidence type="ECO:0000305" key="19">
    <source>
    </source>
</evidence>
<evidence type="ECO:0007744" key="20">
    <source>
    </source>
</evidence>
<evidence type="ECO:0007829" key="21">
    <source>
        <dbReference type="PDB" id="2WP1"/>
    </source>
</evidence>
<evidence type="ECO:0007829" key="22">
    <source>
        <dbReference type="PDB" id="2WP2"/>
    </source>
</evidence>